<keyword id="KW-0131">Cell cycle</keyword>
<keyword id="KW-0132">Cell division</keyword>
<keyword id="KW-0966">Cell projection</keyword>
<keyword id="KW-0159">Chromosome partition</keyword>
<keyword id="KW-0963">Cytoplasm</keyword>
<keyword id="KW-0206">Cytoskeleton</keyword>
<keyword id="KW-0967">Endosome</keyword>
<keyword id="KW-0342">GTP-binding</keyword>
<keyword id="KW-0378">Hydrolase</keyword>
<keyword id="KW-1017">Isopeptide bond</keyword>
<keyword id="KW-0458">Lysosome</keyword>
<keyword id="KW-0472">Membrane</keyword>
<keyword id="KW-0498">Mitosis</keyword>
<keyword id="KW-0547">Nucleotide-binding</keyword>
<keyword id="KW-0653">Protein transport</keyword>
<keyword id="KW-1185">Reference proteome</keyword>
<keyword id="KW-0770">Synapse</keyword>
<keyword id="KW-0813">Transport</keyword>
<keyword id="KW-0832">Ubl conjugation</keyword>
<accession>Q5R6E7</accession>
<name>ARL8B_PONAB</name>
<gene>
    <name type="primary">ARL8B</name>
</gene>
<sequence length="186" mass="21587">MLALISRLLDWFRSLFWKEEMELTLVGLQYSGKTTFVNVIASGQFSEDMIPTVGFNMRKVTKGNVTIKIWDIGGQPRFRSMWERYCRGVNAIVYMIDAAYREKIEASRNELHNLLDKPQLQGIPVLVLGNKRDLPNALDEKQLIEKMNLSAIQDREICCYSISCKEKDNIDITLQWLIQHSKSRRS</sequence>
<feature type="chain" id="PRO_0000232924" description="ADP-ribosylation factor-like protein 8B">
    <location>
        <begin position="1"/>
        <end position="186"/>
    </location>
</feature>
<feature type="intramembrane region" description="Note=Mediates targeting to membranes" evidence="3">
    <location>
        <begin position="1"/>
        <end position="19"/>
    </location>
</feature>
<feature type="binding site" evidence="3">
    <location>
        <begin position="29"/>
        <end position="35"/>
    </location>
    <ligand>
        <name>GTP</name>
        <dbReference type="ChEBI" id="CHEBI:37565"/>
    </ligand>
</feature>
<feature type="binding site" evidence="1">
    <location>
        <begin position="71"/>
        <end position="75"/>
    </location>
    <ligand>
        <name>GTP</name>
        <dbReference type="ChEBI" id="CHEBI:37565"/>
    </ligand>
</feature>
<feature type="binding site" evidence="3">
    <location>
        <begin position="130"/>
        <end position="133"/>
    </location>
    <ligand>
        <name>GTP</name>
        <dbReference type="ChEBI" id="CHEBI:37565"/>
    </ligand>
</feature>
<feature type="cross-link" description="Glycyl lysine isopeptide (Lys-Gly) (interchain with G-Cter in ubiquitin)" evidence="3">
    <location>
        <position position="141"/>
    </location>
</feature>
<reference key="1">
    <citation type="submission" date="2004-11" db="EMBL/GenBank/DDBJ databases">
        <authorList>
            <consortium name="The German cDNA consortium"/>
        </authorList>
    </citation>
    <scope>NUCLEOTIDE SEQUENCE [LARGE SCALE MRNA]</scope>
    <source>
        <tissue>Brain cortex</tissue>
    </source>
</reference>
<dbReference type="EC" id="3.6.5.2" evidence="3"/>
<dbReference type="EMBL" id="CR860544">
    <property type="protein sequence ID" value="CAH92669.1"/>
    <property type="molecule type" value="mRNA"/>
</dbReference>
<dbReference type="RefSeq" id="NP_001126561.1">
    <property type="nucleotide sequence ID" value="NM_001133089.1"/>
</dbReference>
<dbReference type="SMR" id="Q5R6E7"/>
<dbReference type="FunCoup" id="Q5R6E7">
    <property type="interactions" value="2981"/>
</dbReference>
<dbReference type="STRING" id="9601.ENSPPYP00000015314"/>
<dbReference type="GeneID" id="100173552"/>
<dbReference type="KEGG" id="pon:100173552"/>
<dbReference type="CTD" id="55207"/>
<dbReference type="eggNOG" id="KOG0075">
    <property type="taxonomic scope" value="Eukaryota"/>
</dbReference>
<dbReference type="InParanoid" id="Q5R6E7"/>
<dbReference type="OrthoDB" id="2011769at2759"/>
<dbReference type="Proteomes" id="UP000001595">
    <property type="component" value="Unplaced"/>
</dbReference>
<dbReference type="GO" id="GO:1904115">
    <property type="term" value="C:axon cytoplasm"/>
    <property type="evidence" value="ECO:0007669"/>
    <property type="project" value="GOC"/>
</dbReference>
<dbReference type="GO" id="GO:0101004">
    <property type="term" value="C:cytolytic granule membrane"/>
    <property type="evidence" value="ECO:0007669"/>
    <property type="project" value="UniProtKB-SubCell"/>
</dbReference>
<dbReference type="GO" id="GO:0005829">
    <property type="term" value="C:cytosol"/>
    <property type="evidence" value="ECO:0007669"/>
    <property type="project" value="GOC"/>
</dbReference>
<dbReference type="GO" id="GO:0031901">
    <property type="term" value="C:early endosome membrane"/>
    <property type="evidence" value="ECO:0007669"/>
    <property type="project" value="UniProtKB-SubCell"/>
</dbReference>
<dbReference type="GO" id="GO:0031902">
    <property type="term" value="C:late endosome membrane"/>
    <property type="evidence" value="ECO:0007669"/>
    <property type="project" value="UniProtKB-SubCell"/>
</dbReference>
<dbReference type="GO" id="GO:0005764">
    <property type="term" value="C:lysosome"/>
    <property type="evidence" value="ECO:0000250"/>
    <property type="project" value="UniProtKB"/>
</dbReference>
<dbReference type="GO" id="GO:0005819">
    <property type="term" value="C:spindle"/>
    <property type="evidence" value="ECO:0007669"/>
    <property type="project" value="UniProtKB-SubCell"/>
</dbReference>
<dbReference type="GO" id="GO:0045202">
    <property type="term" value="C:synapse"/>
    <property type="evidence" value="ECO:0007669"/>
    <property type="project" value="UniProtKB-SubCell"/>
</dbReference>
<dbReference type="GO" id="GO:0003925">
    <property type="term" value="F:G protein activity"/>
    <property type="evidence" value="ECO:0007669"/>
    <property type="project" value="UniProtKB-EC"/>
</dbReference>
<dbReference type="GO" id="GO:0005525">
    <property type="term" value="F:GTP binding"/>
    <property type="evidence" value="ECO:0007669"/>
    <property type="project" value="UniProtKB-KW"/>
</dbReference>
<dbReference type="GO" id="GO:0008089">
    <property type="term" value="P:anterograde axonal transport"/>
    <property type="evidence" value="ECO:0007669"/>
    <property type="project" value="TreeGrafter"/>
</dbReference>
<dbReference type="GO" id="GO:0002747">
    <property type="term" value="P:antigen processing and presentation following phagocytosis"/>
    <property type="evidence" value="ECO:0000250"/>
    <property type="project" value="UniProtKB"/>
</dbReference>
<dbReference type="GO" id="GO:0002505">
    <property type="term" value="P:antigen processing and presentation of polysaccharide antigen via MHC class II"/>
    <property type="evidence" value="ECO:0000250"/>
    <property type="project" value="UniProtKB"/>
</dbReference>
<dbReference type="GO" id="GO:0061909">
    <property type="term" value="P:autophagosome-lysosome fusion"/>
    <property type="evidence" value="ECO:0000250"/>
    <property type="project" value="UniProtKB"/>
</dbReference>
<dbReference type="GO" id="GO:1990927">
    <property type="term" value="P:calcium ion regulated lysosome exocytosis"/>
    <property type="evidence" value="ECO:0000250"/>
    <property type="project" value="UniProtKB"/>
</dbReference>
<dbReference type="GO" id="GO:0051301">
    <property type="term" value="P:cell division"/>
    <property type="evidence" value="ECO:0007669"/>
    <property type="project" value="UniProtKB-KW"/>
</dbReference>
<dbReference type="GO" id="GO:0007059">
    <property type="term" value="P:chromosome segregation"/>
    <property type="evidence" value="ECO:0007669"/>
    <property type="project" value="UniProtKB-KW"/>
</dbReference>
<dbReference type="GO" id="GO:0090117">
    <property type="term" value="P:endosome to lysosome transport of low-density lipoprotein particle"/>
    <property type="evidence" value="ECO:0000250"/>
    <property type="project" value="UniProtKB"/>
</dbReference>
<dbReference type="GO" id="GO:1902774">
    <property type="term" value="P:late endosome to lysosome transport"/>
    <property type="evidence" value="ECO:0000250"/>
    <property type="project" value="UniProtKB"/>
</dbReference>
<dbReference type="GO" id="GO:0032418">
    <property type="term" value="P:lysosome localization"/>
    <property type="evidence" value="ECO:0000250"/>
    <property type="project" value="UniProtKB"/>
</dbReference>
<dbReference type="GO" id="GO:0042267">
    <property type="term" value="P:natural killer cell mediated cytotoxicity"/>
    <property type="evidence" value="ECO:0000250"/>
    <property type="project" value="UniProtKB"/>
</dbReference>
<dbReference type="GO" id="GO:0090385">
    <property type="term" value="P:phagosome-lysosome fusion"/>
    <property type="evidence" value="ECO:0000250"/>
    <property type="project" value="UniProtKB"/>
</dbReference>
<dbReference type="GO" id="GO:0001778">
    <property type="term" value="P:plasma membrane repair"/>
    <property type="evidence" value="ECO:0000250"/>
    <property type="project" value="UniProtKB"/>
</dbReference>
<dbReference type="GO" id="GO:0015031">
    <property type="term" value="P:protein transport"/>
    <property type="evidence" value="ECO:0007669"/>
    <property type="project" value="UniProtKB-KW"/>
</dbReference>
<dbReference type="CDD" id="cd04159">
    <property type="entry name" value="Arl10_like"/>
    <property type="match status" value="1"/>
</dbReference>
<dbReference type="FunFam" id="3.40.50.300:FF:000247">
    <property type="entry name" value="ADP-ribosylation factor-like GTPase 8A"/>
    <property type="match status" value="1"/>
</dbReference>
<dbReference type="Gene3D" id="3.40.50.300">
    <property type="entry name" value="P-loop containing nucleotide triphosphate hydrolases"/>
    <property type="match status" value="1"/>
</dbReference>
<dbReference type="InterPro" id="IPR044154">
    <property type="entry name" value="Arl8a/8b"/>
</dbReference>
<dbReference type="InterPro" id="IPR027417">
    <property type="entry name" value="P-loop_NTPase"/>
</dbReference>
<dbReference type="InterPro" id="IPR005225">
    <property type="entry name" value="Small_GTP-bd"/>
</dbReference>
<dbReference type="InterPro" id="IPR006689">
    <property type="entry name" value="Small_GTPase_ARF/SAR"/>
</dbReference>
<dbReference type="NCBIfam" id="TIGR00231">
    <property type="entry name" value="small_GTP"/>
    <property type="match status" value="1"/>
</dbReference>
<dbReference type="PANTHER" id="PTHR45732">
    <property type="entry name" value="ADP-RIBOSYLATION FACTOR-LIKE PROTEIN 8"/>
    <property type="match status" value="1"/>
</dbReference>
<dbReference type="PANTHER" id="PTHR45732:SF13">
    <property type="entry name" value="ADP-RIBOSYLATION FACTOR-LIKE PROTEIN 8B"/>
    <property type="match status" value="1"/>
</dbReference>
<dbReference type="Pfam" id="PF00025">
    <property type="entry name" value="Arf"/>
    <property type="match status" value="1"/>
</dbReference>
<dbReference type="PRINTS" id="PR00328">
    <property type="entry name" value="SAR1GTPBP"/>
</dbReference>
<dbReference type="SMART" id="SM00177">
    <property type="entry name" value="ARF"/>
    <property type="match status" value="1"/>
</dbReference>
<dbReference type="SMART" id="SM00175">
    <property type="entry name" value="RAB"/>
    <property type="match status" value="1"/>
</dbReference>
<dbReference type="SMART" id="SM00178">
    <property type="entry name" value="SAR"/>
    <property type="match status" value="1"/>
</dbReference>
<dbReference type="SUPFAM" id="SSF52540">
    <property type="entry name" value="P-loop containing nucleoside triphosphate hydrolases"/>
    <property type="match status" value="1"/>
</dbReference>
<dbReference type="PROSITE" id="PS51417">
    <property type="entry name" value="ARF"/>
    <property type="match status" value="1"/>
</dbReference>
<protein>
    <recommendedName>
        <fullName evidence="4">ADP-ribosylation factor-like protein 8B</fullName>
        <ecNumber evidence="3">3.6.5.2</ecNumber>
    </recommendedName>
</protein>
<evidence type="ECO:0000250" key="1">
    <source>
        <dbReference type="UniProtKB" id="P62330"/>
    </source>
</evidence>
<evidence type="ECO:0000250" key="2">
    <source>
        <dbReference type="UniProtKB" id="Q9CQW2"/>
    </source>
</evidence>
<evidence type="ECO:0000250" key="3">
    <source>
        <dbReference type="UniProtKB" id="Q9NVJ2"/>
    </source>
</evidence>
<evidence type="ECO:0000305" key="4"/>
<proteinExistence type="evidence at transcript level"/>
<organism>
    <name type="scientific">Pongo abelii</name>
    <name type="common">Sumatran orangutan</name>
    <name type="synonym">Pongo pygmaeus abelii</name>
    <dbReference type="NCBI Taxonomy" id="9601"/>
    <lineage>
        <taxon>Eukaryota</taxon>
        <taxon>Metazoa</taxon>
        <taxon>Chordata</taxon>
        <taxon>Craniata</taxon>
        <taxon>Vertebrata</taxon>
        <taxon>Euteleostomi</taxon>
        <taxon>Mammalia</taxon>
        <taxon>Eutheria</taxon>
        <taxon>Euarchontoglires</taxon>
        <taxon>Primates</taxon>
        <taxon>Haplorrhini</taxon>
        <taxon>Catarrhini</taxon>
        <taxon>Hominidae</taxon>
        <taxon>Pongo</taxon>
    </lineage>
</organism>
<comment type="function">
    <text evidence="2 3">Small GTPase which cycles between active GTP-bound and inactive GDP-bound states. In its active state, binds to a variety of effector proteins playing a key role in the regulation of lysosomal positioning which is important for nutrient sensing, natural killer cell-mediated cytotoxicity and antigen presentation. Along with its effectors, orchestrates lysosomal transport and fusion. Localizes specifically to lysosomal membranes and mediates anterograde lysosomal motility by recruiting PLEKHM2, which in turn recruits the motor protein kinesin-1 on lysosomes. Required for lysosomal and cytolytic granule exocytosis. Critical factor involved in NK cell-mediated cytotoxicity. Drives the polarization of cytolytic granules and microtubule-organizing centers (MTOCs) toward the immune synapse between effector NK lymphocytes and target cells (By similarity). In neurons, mediates the anterograde axonal long-range transport of presynaptic lysosome-related vesicles required for presynaptic biogenesis and synaptic function (By similarity). Also acts as a regulator of endosome to lysosome trafficking pathways of special significance for host defense (By similarity). Recruits RUFY1 onto early endosomes regulating endosomes to trans-Golgi network proteins retrieval (By similarity). Regulates cargo trafficking to lysosomes by binding to PLEKHM1 and recruiting the HOPS subunit VPS41, resulting in functional assembly of the HOPS complex on lysosomal membranes. Plays an important role in cargo delivery to lysosomes for antigen presentation and microbial killing. Directs the intersection of CD1d with lipid antigens in lysosomes, and plays a role in intersecting phagosomes with lysosomes to generate phagolysosomes that kill microbes (By similarity). Involved in the process of MHC II presentation. Regulates the delivery of antigens to lysosomes and the formation of MHC II-peptide complexes through the recruitment of the HOPS complex to lysosomes allowing the fusion of late endosomes to lysosomes (By similarity). May play a role in chromosome segregation (By similarity).</text>
</comment>
<comment type="catalytic activity">
    <reaction evidence="3">
        <text>GTP + H2O = GDP + phosphate + H(+)</text>
        <dbReference type="Rhea" id="RHEA:19669"/>
        <dbReference type="ChEBI" id="CHEBI:15377"/>
        <dbReference type="ChEBI" id="CHEBI:15378"/>
        <dbReference type="ChEBI" id="CHEBI:37565"/>
        <dbReference type="ChEBI" id="CHEBI:43474"/>
        <dbReference type="ChEBI" id="CHEBI:58189"/>
        <dbReference type="EC" id="3.6.5.2"/>
    </reaction>
    <physiologicalReaction direction="left-to-right" evidence="3">
        <dbReference type="Rhea" id="RHEA:19670"/>
    </physiologicalReaction>
</comment>
<comment type="subunit">
    <text evidence="3">Interacts with tubulin. Interacts with BORCS5; recruits ARL8B to lysosomes. Interacts with VPS41; the interaction mediates the recruitment of the HOPS complex to lysosomes. Interacts (GTP-bound form) with PLEKHM2 (via RUN domain); the interaction is required to recruit the motor protein kinesin-1 on lysosomes. Interacts (GTP-bound form) with PLEKHM1 (via RUN domain); the interaction is required for PLEKHM1 localization to lysosomes and for ARL8B function in delivery and degradation of endocytic and autophagic cargo in lysosomes. PLEKHM1 and PLEKHM2 compete for interaction with ARL8B. Interacts (GTP-bound form) with RUFY1; the interaction is required for RUFY1 endosomal location. When GTP-bound, interacts with RUFY3 and RUFY4, but not with RUFY1, nor RUFY2 (By similarity).</text>
</comment>
<comment type="subcellular location">
    <subcellularLocation>
        <location evidence="3">Late endosome membrane</location>
    </subcellularLocation>
    <subcellularLocation>
        <location evidence="3">Lysosome membrane</location>
    </subcellularLocation>
    <subcellularLocation>
        <location evidence="3">Cytoplasm</location>
        <location evidence="3">Cytoskeleton</location>
        <location evidence="3">Spindle</location>
    </subcellularLocation>
    <subcellularLocation>
        <location evidence="2">Cell projection</location>
        <location evidence="2">Axon</location>
    </subcellularLocation>
    <subcellularLocation>
        <location evidence="2">Synapse</location>
    </subcellularLocation>
    <subcellularLocation>
        <location evidence="3">Cytolytic granule membrane</location>
    </subcellularLocation>
    <subcellularLocation>
        <location evidence="3">Early endosome membrane</location>
    </subcellularLocation>
    <text evidence="2 3">GTP-bound form resides on lysosomal membranes, whereas GDP-bound form is likely associated with microtubular structures. Localizes with microtubules at the spindle mid-zone during mitosis (By similarity). In dendritic cells, localizes to MHC II+ compartments (By similarity).</text>
</comment>
<comment type="PTM">
    <text evidence="3">Ubiquitinated at Lys-141 by RNF167, leading to its degradation.</text>
</comment>
<comment type="similarity">
    <text evidence="4">Belongs to the small GTPase superfamily. Arf family.</text>
</comment>